<accession>P0A7T8</accession>
<accession>P02374</accession>
<evidence type="ECO:0000250" key="1"/>
<evidence type="ECO:0000255" key="2">
    <source>
        <dbReference type="HAMAP-Rule" id="MF_00270"/>
    </source>
</evidence>
<evidence type="ECO:0000305" key="3"/>
<feature type="initiator methionine" description="Removed" evidence="1">
    <location>
        <position position="1"/>
    </location>
</feature>
<feature type="chain" id="PRO_0000111154" description="Small ribosomal subunit protein bS18">
    <location>
        <begin position="2"/>
        <end position="75"/>
    </location>
</feature>
<feature type="modified residue" description="N-acetylalanine" evidence="1">
    <location>
        <position position="2"/>
    </location>
</feature>
<keyword id="KW-0007">Acetylation</keyword>
<keyword id="KW-1185">Reference proteome</keyword>
<keyword id="KW-0687">Ribonucleoprotein</keyword>
<keyword id="KW-0689">Ribosomal protein</keyword>
<keyword id="KW-0694">RNA-binding</keyword>
<keyword id="KW-0699">rRNA-binding</keyword>
<comment type="function">
    <text evidence="2">Binds as a heterodimer with protein bS6 to the central domain of the 16S rRNA, where it helps stabilize the platform of the 30S subunit.</text>
</comment>
<comment type="subunit">
    <text evidence="2">Part of the 30S ribosomal subunit. Forms a tight heterodimer with protein bS6.</text>
</comment>
<comment type="similarity">
    <text evidence="3">Belongs to the bacterial ribosomal protein bS18 family.</text>
</comment>
<protein>
    <recommendedName>
        <fullName evidence="3">Small ribosomal subunit protein bS18</fullName>
    </recommendedName>
    <alternativeName>
        <fullName>30S ribosomal protein S18</fullName>
    </alternativeName>
</protein>
<gene>
    <name type="primary">rpsR</name>
    <name type="ordered locus">c5292</name>
</gene>
<dbReference type="EMBL" id="AE014075">
    <property type="protein sequence ID" value="AAN83713.1"/>
    <property type="molecule type" value="Genomic_DNA"/>
</dbReference>
<dbReference type="RefSeq" id="WP_000135199.1">
    <property type="nucleotide sequence ID" value="NZ_CP051263.1"/>
</dbReference>
<dbReference type="SMR" id="P0A7T8"/>
<dbReference type="STRING" id="199310.c5292"/>
<dbReference type="GeneID" id="98186237"/>
<dbReference type="KEGG" id="ecc:c5292"/>
<dbReference type="eggNOG" id="COG0238">
    <property type="taxonomic scope" value="Bacteria"/>
</dbReference>
<dbReference type="HOGENOM" id="CLU_148710_2_3_6"/>
<dbReference type="BioCyc" id="ECOL199310:C5292-MONOMER"/>
<dbReference type="Proteomes" id="UP000001410">
    <property type="component" value="Chromosome"/>
</dbReference>
<dbReference type="GO" id="GO:0022627">
    <property type="term" value="C:cytosolic small ribosomal subunit"/>
    <property type="evidence" value="ECO:0007669"/>
    <property type="project" value="TreeGrafter"/>
</dbReference>
<dbReference type="GO" id="GO:0070181">
    <property type="term" value="F:small ribosomal subunit rRNA binding"/>
    <property type="evidence" value="ECO:0007669"/>
    <property type="project" value="TreeGrafter"/>
</dbReference>
<dbReference type="GO" id="GO:0003735">
    <property type="term" value="F:structural constituent of ribosome"/>
    <property type="evidence" value="ECO:0007669"/>
    <property type="project" value="InterPro"/>
</dbReference>
<dbReference type="GO" id="GO:0006412">
    <property type="term" value="P:translation"/>
    <property type="evidence" value="ECO:0007669"/>
    <property type="project" value="UniProtKB-UniRule"/>
</dbReference>
<dbReference type="FunFam" id="4.10.640.10:FF:000001">
    <property type="entry name" value="30S ribosomal protein S18"/>
    <property type="match status" value="1"/>
</dbReference>
<dbReference type="Gene3D" id="4.10.640.10">
    <property type="entry name" value="Ribosomal protein S18"/>
    <property type="match status" value="1"/>
</dbReference>
<dbReference type="HAMAP" id="MF_00270">
    <property type="entry name" value="Ribosomal_bS18"/>
    <property type="match status" value="1"/>
</dbReference>
<dbReference type="InterPro" id="IPR001648">
    <property type="entry name" value="Ribosomal_bS18"/>
</dbReference>
<dbReference type="InterPro" id="IPR018275">
    <property type="entry name" value="Ribosomal_bS18_CS"/>
</dbReference>
<dbReference type="InterPro" id="IPR036870">
    <property type="entry name" value="Ribosomal_bS18_sf"/>
</dbReference>
<dbReference type="NCBIfam" id="TIGR00165">
    <property type="entry name" value="S18"/>
    <property type="match status" value="1"/>
</dbReference>
<dbReference type="PANTHER" id="PTHR13479">
    <property type="entry name" value="30S RIBOSOMAL PROTEIN S18"/>
    <property type="match status" value="1"/>
</dbReference>
<dbReference type="PANTHER" id="PTHR13479:SF40">
    <property type="entry name" value="SMALL RIBOSOMAL SUBUNIT PROTEIN BS18M"/>
    <property type="match status" value="1"/>
</dbReference>
<dbReference type="Pfam" id="PF01084">
    <property type="entry name" value="Ribosomal_S18"/>
    <property type="match status" value="1"/>
</dbReference>
<dbReference type="PRINTS" id="PR00974">
    <property type="entry name" value="RIBOSOMALS18"/>
</dbReference>
<dbReference type="SUPFAM" id="SSF46911">
    <property type="entry name" value="Ribosomal protein S18"/>
    <property type="match status" value="1"/>
</dbReference>
<dbReference type="PROSITE" id="PS00057">
    <property type="entry name" value="RIBOSOMAL_S18"/>
    <property type="match status" value="1"/>
</dbReference>
<name>RS18_ECOL6</name>
<sequence>MARYFRRRKFCRFTAEGVQEIDYKDIATLKNYITESGKIVPSRITGTRAKYQRQLARAIKRARYLSLLPYTDRHQ</sequence>
<proteinExistence type="inferred from homology"/>
<organism>
    <name type="scientific">Escherichia coli O6:H1 (strain CFT073 / ATCC 700928 / UPEC)</name>
    <dbReference type="NCBI Taxonomy" id="199310"/>
    <lineage>
        <taxon>Bacteria</taxon>
        <taxon>Pseudomonadati</taxon>
        <taxon>Pseudomonadota</taxon>
        <taxon>Gammaproteobacteria</taxon>
        <taxon>Enterobacterales</taxon>
        <taxon>Enterobacteriaceae</taxon>
        <taxon>Escherichia</taxon>
    </lineage>
</organism>
<reference key="1">
    <citation type="journal article" date="2002" name="Proc. Natl. Acad. Sci. U.S.A.">
        <title>Extensive mosaic structure revealed by the complete genome sequence of uropathogenic Escherichia coli.</title>
        <authorList>
            <person name="Welch R.A."/>
            <person name="Burland V."/>
            <person name="Plunkett G. III"/>
            <person name="Redford P."/>
            <person name="Roesch P."/>
            <person name="Rasko D."/>
            <person name="Buckles E.L."/>
            <person name="Liou S.-R."/>
            <person name="Boutin A."/>
            <person name="Hackett J."/>
            <person name="Stroud D."/>
            <person name="Mayhew G.F."/>
            <person name="Rose D.J."/>
            <person name="Zhou S."/>
            <person name="Schwartz D.C."/>
            <person name="Perna N.T."/>
            <person name="Mobley H.L.T."/>
            <person name="Donnenberg M.S."/>
            <person name="Blattner F.R."/>
        </authorList>
    </citation>
    <scope>NUCLEOTIDE SEQUENCE [LARGE SCALE GENOMIC DNA]</scope>
    <source>
        <strain>CFT073 / ATCC 700928 / UPEC</strain>
    </source>
</reference>